<organism>
    <name type="scientific">Bluetongue virus 10 (isolate USA)</name>
    <name type="common">BTV 10</name>
    <dbReference type="NCBI Taxonomy" id="10900"/>
    <lineage>
        <taxon>Viruses</taxon>
        <taxon>Riboviria</taxon>
        <taxon>Orthornavirae</taxon>
        <taxon>Duplornaviricota</taxon>
        <taxon>Resentoviricetes</taxon>
        <taxon>Reovirales</taxon>
        <taxon>Sedoreoviridae</taxon>
        <taxon>Orbivirus</taxon>
        <taxon>Bluetongue virus</taxon>
    </lineage>
</organism>
<proteinExistence type="evidence at protein level"/>
<name>VP6A_BTV10</name>
<gene>
    <name type="primary">Segment-9</name>
</gene>
<reference key="1">
    <citation type="journal article" date="1989" name="J. Gen. Virol.">
        <title>Completion of the sequence of bluetongue virus serotype 10 by the characterization of a structural protein, VP6, and a non-structural protein, NS2.</title>
        <authorList>
            <person name="Fukusho A."/>
            <person name="Yu Y."/>
            <person name="Yamaguchi S."/>
            <person name="Roy P."/>
        </authorList>
    </citation>
    <scope>NUCLEOTIDE SEQUENCE [GENOMIC RNA]</scope>
</reference>
<reference key="2">
    <citation type="submission" date="2010-01" db="EMBL/GenBank/DDBJ databases">
        <authorList>
            <person name="Blachere C."/>
        </authorList>
    </citation>
    <scope>SEQUENCE REVISION</scope>
</reference>
<reference key="3">
    <citation type="journal article" date="1996" name="J. Virol.">
        <title>Phylogenetic comparison of the S3 gene of United States prototype strains of bluetongue virus with that of field isolates from California.</title>
        <authorList>
            <person name="de Mattos C.C."/>
            <person name="de Mattos C.A."/>
            <person name="MacLachlan N.J."/>
            <person name="Giavedoni L.D."/>
            <person name="Yilma T."/>
            <person name="Osburn B.I."/>
        </authorList>
    </citation>
    <scope>NUCLEOTIDE SEQUENCE [GENOMIC RNA]</scope>
    <source>
        <strain>Isolate 10O80Z</strain>
        <strain>isolate BTV10</strain>
    </source>
</reference>
<reference key="4">
    <citation type="journal article" date="1997" name="J. Virol.">
        <title>Bluetongue virus VP6 protein binds ATP and exhibits an RNA-dependent ATPase function and a helicase activity that catalyze the unwinding of double-stranded RNA substrates.</title>
        <authorList>
            <person name="Staeuber N."/>
            <person name="Martinez-Costas J."/>
            <person name="Sutton G."/>
            <person name="Monastyrskaya K."/>
            <person name="Roy P."/>
        </authorList>
    </citation>
    <scope>FUNCTION</scope>
    <scope>CATALYTIC ACTIVITY</scope>
</reference>
<reference key="5">
    <citation type="journal article" date="2003" name="J. Virol.">
        <title>Defining the structure-function relationships of bluetongue virus helicase protein VP6.</title>
        <authorList>
            <person name="Kar A.K."/>
            <person name="Roy P."/>
        </authorList>
    </citation>
    <scope>FUNCTION</scope>
    <scope>MUTAGENESIS OF LYS-110; GLU-157 AND ARG-205</scope>
</reference>
<evidence type="ECO:0000256" key="1">
    <source>
        <dbReference type="SAM" id="MobiDB-lite"/>
    </source>
</evidence>
<evidence type="ECO:0000269" key="2">
    <source>
    </source>
</evidence>
<evidence type="ECO:0000269" key="3">
    <source>
    </source>
</evidence>
<evidence type="ECO:0000305" key="4"/>
<keyword id="KW-0024">Alternative initiation</keyword>
<keyword id="KW-0067">ATP-binding</keyword>
<keyword id="KW-0378">Hydrolase</keyword>
<keyword id="KW-0547">Nucleotide-binding</keyword>
<keyword id="KW-1185">Reference proteome</keyword>
<keyword id="KW-0946">Virion</keyword>
<dbReference type="EC" id="3.6.4.13" evidence="3"/>
<dbReference type="EMBL" id="D00509">
    <property type="protein sequence ID" value="BAA00399.2"/>
    <property type="molecule type" value="Genomic_RNA"/>
</dbReference>
<dbReference type="EMBL" id="U55781">
    <property type="protein sequence ID" value="AAC55309.1"/>
    <property type="molecule type" value="Genomic_RNA"/>
</dbReference>
<dbReference type="EMBL" id="U55801">
    <property type="protein sequence ID" value="AAC55329.1"/>
    <property type="molecule type" value="Genomic_RNA"/>
</dbReference>
<dbReference type="SMR" id="Q98829"/>
<dbReference type="KEGG" id="vg:2943150"/>
<dbReference type="Proteomes" id="UP000007662">
    <property type="component" value="Genome"/>
</dbReference>
<dbReference type="GO" id="GO:0019028">
    <property type="term" value="C:viral capsid"/>
    <property type="evidence" value="ECO:0007669"/>
    <property type="project" value="InterPro"/>
</dbReference>
<dbReference type="GO" id="GO:0005524">
    <property type="term" value="F:ATP binding"/>
    <property type="evidence" value="ECO:0007669"/>
    <property type="project" value="UniProtKB-KW"/>
</dbReference>
<dbReference type="GO" id="GO:0016787">
    <property type="term" value="F:hydrolase activity"/>
    <property type="evidence" value="ECO:0007669"/>
    <property type="project" value="UniProtKB-KW"/>
</dbReference>
<dbReference type="GO" id="GO:0005198">
    <property type="term" value="F:structural molecule activity"/>
    <property type="evidence" value="ECO:0007669"/>
    <property type="project" value="InterPro"/>
</dbReference>
<dbReference type="InterPro" id="IPR001399">
    <property type="entry name" value="Orbi_VP6"/>
</dbReference>
<dbReference type="Pfam" id="PF01516">
    <property type="entry name" value="Orbi_VP6"/>
    <property type="match status" value="1"/>
</dbReference>
<dbReference type="PRINTS" id="PR00902">
    <property type="entry name" value="VP6CAPSID"/>
</dbReference>
<protein>
    <recommendedName>
        <fullName>Helicase VP6-A</fullName>
        <ecNumber evidence="3">3.6.4.13</ecNumber>
    </recommendedName>
    <alternativeName>
        <fullName>Minor inner core protein VP6-A</fullName>
    </alternativeName>
</protein>
<accession>Q98829</accession>
<accession>P23066</accession>
<accession>Q6LCJ9</accession>
<organismHost>
    <name type="scientific">Antilocapra americana</name>
    <name type="common">Pronghorn</name>
    <dbReference type="NCBI Taxonomy" id="9891"/>
</organismHost>
<organismHost>
    <name type="scientific">Bos taurus</name>
    <name type="common">Bovine</name>
    <dbReference type="NCBI Taxonomy" id="9913"/>
</organismHost>
<organismHost>
    <name type="scientific">Capra hircus</name>
    <name type="common">Goat</name>
    <dbReference type="NCBI Taxonomy" id="9925"/>
</organismHost>
<organismHost>
    <name type="scientific">Culicoides variipennis</name>
    <name type="common">Biting midge</name>
    <dbReference type="NCBI Taxonomy" id="46212"/>
</organismHost>
<organismHost>
    <name type="scientific">Ovis aries</name>
    <name type="common">Sheep</name>
    <dbReference type="NCBI Taxonomy" id="9940"/>
</organismHost>
<comment type="function">
    <text evidence="2 3">ATP dependent RNA helicase essential for RNA packaging and viral transcription. Possesses ss- and dsRNA-binding capacity.</text>
</comment>
<comment type="catalytic activity">
    <reaction evidence="3">
        <text>ATP + H2O = ADP + phosphate + H(+)</text>
        <dbReference type="Rhea" id="RHEA:13065"/>
        <dbReference type="ChEBI" id="CHEBI:15377"/>
        <dbReference type="ChEBI" id="CHEBI:15378"/>
        <dbReference type="ChEBI" id="CHEBI:30616"/>
        <dbReference type="ChEBI" id="CHEBI:43474"/>
        <dbReference type="ChEBI" id="CHEBI:456216"/>
        <dbReference type="EC" id="3.6.4.13"/>
    </reaction>
</comment>
<comment type="subunit">
    <text evidence="2">Homohexamer.</text>
</comment>
<comment type="subcellular location">
    <subcellularLocation>
        <location>Virion</location>
    </subcellularLocation>
    <text>Inner capsid.</text>
</comment>
<comment type="alternative products">
    <event type="alternative initiation"/>
    <isoform>
        <id>Q98829-1</id>
        <name>Protein VP6-A</name>
        <sequence type="displayed"/>
    </isoform>
    <isoform>
        <id>P33423-1</id>
        <name>Protein VP6-B</name>
        <sequence type="external"/>
    </isoform>
</comment>
<comment type="similarity">
    <text evidence="4">Belongs to the reoviruses VP6 family.</text>
</comment>
<feature type="chain" id="PRO_0000372866" description="Helicase VP6-A">
    <location>
        <begin position="1"/>
        <end position="329"/>
    </location>
</feature>
<feature type="region of interest" description="Disordered" evidence="1">
    <location>
        <begin position="28"/>
        <end position="130"/>
    </location>
</feature>
<feature type="region of interest" description="Disordered" evidence="1">
    <location>
        <begin position="189"/>
        <end position="232"/>
    </location>
</feature>
<feature type="compositionally biased region" description="Basic and acidic residues" evidence="1">
    <location>
        <begin position="36"/>
        <end position="58"/>
    </location>
</feature>
<feature type="compositionally biased region" description="Basic and acidic residues" evidence="1">
    <location>
        <begin position="65"/>
        <end position="83"/>
    </location>
</feature>
<feature type="compositionally biased region" description="Basic and acidic residues" evidence="1">
    <location>
        <begin position="96"/>
        <end position="109"/>
    </location>
</feature>
<feature type="compositionally biased region" description="Gly residues" evidence="1">
    <location>
        <begin position="110"/>
        <end position="129"/>
    </location>
</feature>
<feature type="compositionally biased region" description="Basic and acidic residues" evidence="1">
    <location>
        <begin position="189"/>
        <end position="207"/>
    </location>
</feature>
<feature type="compositionally biased region" description="Basic and acidic residues" evidence="1">
    <location>
        <begin position="215"/>
        <end position="232"/>
    </location>
</feature>
<feature type="binding site" evidence="2">
    <location>
        <position position="110"/>
    </location>
    <ligand>
        <name>ATP</name>
        <dbReference type="ChEBI" id="CHEBI:30616"/>
    </ligand>
</feature>
<feature type="mutagenesis site" description="Complete loss of ATP hydrolysis activity and ATP binding." evidence="2">
    <original>K</original>
    <variation>N</variation>
    <location>
        <position position="110"/>
    </location>
</feature>
<feature type="mutagenesis site" description="No effect on ATP hydrolysis activity or ATP binding." evidence="2">
    <original>E</original>
    <variation>N</variation>
    <location>
        <position position="157"/>
    </location>
</feature>
<feature type="mutagenesis site" description="Complete loss of ATP hydrolysis activity and RNA binding activity." evidence="2">
    <original>R</original>
    <variation>Q</variation>
    <location>
        <position position="205"/>
    </location>
</feature>
<sequence length="329" mass="35530">MSAAILLAPGDVIKRSSEELKQRQIQINLVDWMESEGGKEDKTEPKEESKAEGSKDGEGTQSESGQKEEGGKETKDADVDRRIHTAVGSGSGTKGSGERANENANRGDGKVGGGGGDADAGVGATGTNGGRWVVLTEEIARAIESKYGTKIDVYRDEVPAQIIEVERSLQKELGISREGVAEQTERLRDLRRKEKNGTHAKAVERGGRKQRKKAHGDAQREGVEEEKTSEEPARIGITIEGVMSQKKLLSMIGGVERKMAPIGARESAVMLVSNSIKDVVRATAYFTAPTGDPHWKEVAREASKKKNILAYTSTGGDVKTEFLHLIDHL</sequence>